<proteinExistence type="inferred from homology"/>
<name>Y1273_LATSS</name>
<keyword id="KW-1003">Cell membrane</keyword>
<keyword id="KW-0472">Membrane</keyword>
<keyword id="KW-1185">Reference proteome</keyword>
<keyword id="KW-0812">Transmembrane</keyword>
<keyword id="KW-1133">Transmembrane helix</keyword>
<accession>Q38W56</accession>
<reference key="1">
    <citation type="journal article" date="2005" name="Nat. Biotechnol.">
        <title>The complete genome sequence of the meat-borne lactic acid bacterium Lactobacillus sakei 23K.</title>
        <authorList>
            <person name="Chaillou S."/>
            <person name="Champomier-Verges M.-C."/>
            <person name="Cornet M."/>
            <person name="Crutz-Le Coq A.-M."/>
            <person name="Dudez A.-M."/>
            <person name="Martin V."/>
            <person name="Beaufils S."/>
            <person name="Darbon-Rongere E."/>
            <person name="Bossy R."/>
            <person name="Loux V."/>
            <person name="Zagorec M."/>
        </authorList>
    </citation>
    <scope>NUCLEOTIDE SEQUENCE [LARGE SCALE GENOMIC DNA]</scope>
    <source>
        <strain>23K</strain>
    </source>
</reference>
<protein>
    <recommendedName>
        <fullName evidence="1">UPF0154 protein LCA_1273</fullName>
    </recommendedName>
</protein>
<organism>
    <name type="scientific">Latilactobacillus sakei subsp. sakei (strain 23K)</name>
    <name type="common">Lactobacillus sakei subsp. sakei</name>
    <dbReference type="NCBI Taxonomy" id="314315"/>
    <lineage>
        <taxon>Bacteria</taxon>
        <taxon>Bacillati</taxon>
        <taxon>Bacillota</taxon>
        <taxon>Bacilli</taxon>
        <taxon>Lactobacillales</taxon>
        <taxon>Lactobacillaceae</taxon>
        <taxon>Latilactobacillus</taxon>
    </lineage>
</organism>
<comment type="subcellular location">
    <subcellularLocation>
        <location evidence="1">Cell membrane</location>
        <topology evidence="1">Single-pass membrane protein</topology>
    </subcellularLocation>
</comment>
<comment type="similarity">
    <text evidence="1">Belongs to the UPF0154 family.</text>
</comment>
<sequence length="76" mass="8519">MNIGIGVLIFVIGALLGAVAGFFGARAYMKKYFEENPPVNEDMLKAMMMQMGQKPSEKKLNQMMSSMKAQQKRSKK</sequence>
<gene>
    <name type="ordered locus">LCA_1273</name>
</gene>
<feature type="chain" id="PRO_1000005633" description="UPF0154 protein LCA_1273">
    <location>
        <begin position="1"/>
        <end position="76"/>
    </location>
</feature>
<feature type="transmembrane region" description="Helical" evidence="1">
    <location>
        <begin position="3"/>
        <end position="23"/>
    </location>
</feature>
<feature type="region of interest" description="Disordered" evidence="2">
    <location>
        <begin position="55"/>
        <end position="76"/>
    </location>
</feature>
<evidence type="ECO:0000255" key="1">
    <source>
        <dbReference type="HAMAP-Rule" id="MF_00363"/>
    </source>
</evidence>
<evidence type="ECO:0000256" key="2">
    <source>
        <dbReference type="SAM" id="MobiDB-lite"/>
    </source>
</evidence>
<dbReference type="EMBL" id="CR936503">
    <property type="protein sequence ID" value="CAI55577.1"/>
    <property type="molecule type" value="Genomic_DNA"/>
</dbReference>
<dbReference type="RefSeq" id="WP_011374970.1">
    <property type="nucleotide sequence ID" value="NC_007576.1"/>
</dbReference>
<dbReference type="SMR" id="Q38W56"/>
<dbReference type="STRING" id="314315.LCA_1273"/>
<dbReference type="KEGG" id="lsa:LCA_1273"/>
<dbReference type="eggNOG" id="COG3763">
    <property type="taxonomic scope" value="Bacteria"/>
</dbReference>
<dbReference type="HOGENOM" id="CLU_180108_0_1_9"/>
<dbReference type="OrthoDB" id="1769076at2"/>
<dbReference type="Proteomes" id="UP000002707">
    <property type="component" value="Chromosome"/>
</dbReference>
<dbReference type="GO" id="GO:0005886">
    <property type="term" value="C:plasma membrane"/>
    <property type="evidence" value="ECO:0007669"/>
    <property type="project" value="UniProtKB-SubCell"/>
</dbReference>
<dbReference type="HAMAP" id="MF_00363">
    <property type="entry name" value="UPF0154"/>
    <property type="match status" value="1"/>
</dbReference>
<dbReference type="InterPro" id="IPR005359">
    <property type="entry name" value="UPF0154"/>
</dbReference>
<dbReference type="Pfam" id="PF03672">
    <property type="entry name" value="UPF0154"/>
    <property type="match status" value="1"/>
</dbReference>